<dbReference type="EC" id="3.1.-.-" evidence="1"/>
<dbReference type="EC" id="5.6.2.4" evidence="1"/>
<dbReference type="EMBL" id="CP000724">
    <property type="protein sequence ID" value="ABR50250.1"/>
    <property type="molecule type" value="Genomic_DNA"/>
</dbReference>
<dbReference type="RefSeq" id="WP_012065198.1">
    <property type="nucleotide sequence ID" value="NC_009633.1"/>
</dbReference>
<dbReference type="SMR" id="A6TVN2"/>
<dbReference type="STRING" id="293826.Amet_4169"/>
<dbReference type="KEGG" id="amt:Amet_4169"/>
<dbReference type="eggNOG" id="COG1074">
    <property type="taxonomic scope" value="Bacteria"/>
</dbReference>
<dbReference type="HOGENOM" id="CLU_001114_3_1_9"/>
<dbReference type="OrthoDB" id="9810135at2"/>
<dbReference type="Proteomes" id="UP000001572">
    <property type="component" value="Chromosome"/>
</dbReference>
<dbReference type="GO" id="GO:0005829">
    <property type="term" value="C:cytosol"/>
    <property type="evidence" value="ECO:0007669"/>
    <property type="project" value="TreeGrafter"/>
</dbReference>
<dbReference type="GO" id="GO:0033202">
    <property type="term" value="C:DNA helicase complex"/>
    <property type="evidence" value="ECO:0007669"/>
    <property type="project" value="TreeGrafter"/>
</dbReference>
<dbReference type="GO" id="GO:0043138">
    <property type="term" value="F:3'-5' DNA helicase activity"/>
    <property type="evidence" value="ECO:0007669"/>
    <property type="project" value="UniProtKB-UniRule"/>
</dbReference>
<dbReference type="GO" id="GO:0008408">
    <property type="term" value="F:3'-5' exonuclease activity"/>
    <property type="evidence" value="ECO:0007669"/>
    <property type="project" value="UniProtKB-UniRule"/>
</dbReference>
<dbReference type="GO" id="GO:0005524">
    <property type="term" value="F:ATP binding"/>
    <property type="evidence" value="ECO:0007669"/>
    <property type="project" value="UniProtKB-UniRule"/>
</dbReference>
<dbReference type="GO" id="GO:0016887">
    <property type="term" value="F:ATP hydrolysis activity"/>
    <property type="evidence" value="ECO:0007669"/>
    <property type="project" value="RHEA"/>
</dbReference>
<dbReference type="GO" id="GO:0003690">
    <property type="term" value="F:double-stranded DNA binding"/>
    <property type="evidence" value="ECO:0007669"/>
    <property type="project" value="UniProtKB-UniRule"/>
</dbReference>
<dbReference type="GO" id="GO:0000724">
    <property type="term" value="P:double-strand break repair via homologous recombination"/>
    <property type="evidence" value="ECO:0007669"/>
    <property type="project" value="UniProtKB-UniRule"/>
</dbReference>
<dbReference type="CDD" id="cd17932">
    <property type="entry name" value="DEXQc_UvrD"/>
    <property type="match status" value="2"/>
</dbReference>
<dbReference type="FunFam" id="3.40.50.300:FF:001236">
    <property type="entry name" value="ATP-dependent helicase/nuclease subunit A"/>
    <property type="match status" value="1"/>
</dbReference>
<dbReference type="Gene3D" id="3.90.320.10">
    <property type="match status" value="1"/>
</dbReference>
<dbReference type="Gene3D" id="3.40.50.300">
    <property type="entry name" value="P-loop containing nucleotide triphosphate hydrolases"/>
    <property type="match status" value="4"/>
</dbReference>
<dbReference type="HAMAP" id="MF_01451">
    <property type="entry name" value="AddA"/>
    <property type="match status" value="1"/>
</dbReference>
<dbReference type="InterPro" id="IPR014152">
    <property type="entry name" value="AddA"/>
</dbReference>
<dbReference type="InterPro" id="IPR014017">
    <property type="entry name" value="DNA_helicase_UvrD-like_C"/>
</dbReference>
<dbReference type="InterPro" id="IPR000212">
    <property type="entry name" value="DNA_helicase_UvrD/REP"/>
</dbReference>
<dbReference type="InterPro" id="IPR027417">
    <property type="entry name" value="P-loop_NTPase"/>
</dbReference>
<dbReference type="InterPro" id="IPR011604">
    <property type="entry name" value="PDDEXK-like_dom_sf"/>
</dbReference>
<dbReference type="InterPro" id="IPR038726">
    <property type="entry name" value="PDDEXK_AddAB-type"/>
</dbReference>
<dbReference type="InterPro" id="IPR011335">
    <property type="entry name" value="Restrct_endonuc-II-like"/>
</dbReference>
<dbReference type="InterPro" id="IPR014016">
    <property type="entry name" value="UvrD-like_ATP-bd"/>
</dbReference>
<dbReference type="NCBIfam" id="TIGR02785">
    <property type="entry name" value="addA_Gpos"/>
    <property type="match status" value="1"/>
</dbReference>
<dbReference type="PANTHER" id="PTHR11070:SF48">
    <property type="entry name" value="ATP-DEPENDENT HELICASE_NUCLEASE SUBUNIT A"/>
    <property type="match status" value="1"/>
</dbReference>
<dbReference type="PANTHER" id="PTHR11070">
    <property type="entry name" value="UVRD / RECB / PCRA DNA HELICASE FAMILY MEMBER"/>
    <property type="match status" value="1"/>
</dbReference>
<dbReference type="Pfam" id="PF12705">
    <property type="entry name" value="PDDEXK_1"/>
    <property type="match status" value="1"/>
</dbReference>
<dbReference type="Pfam" id="PF00580">
    <property type="entry name" value="UvrD-helicase"/>
    <property type="match status" value="1"/>
</dbReference>
<dbReference type="Pfam" id="PF13361">
    <property type="entry name" value="UvrD_C"/>
    <property type="match status" value="1"/>
</dbReference>
<dbReference type="SUPFAM" id="SSF52540">
    <property type="entry name" value="P-loop containing nucleoside triphosphate hydrolases"/>
    <property type="match status" value="1"/>
</dbReference>
<dbReference type="SUPFAM" id="SSF52980">
    <property type="entry name" value="Restriction endonuclease-like"/>
    <property type="match status" value="1"/>
</dbReference>
<dbReference type="PROSITE" id="PS51198">
    <property type="entry name" value="UVRD_HELICASE_ATP_BIND"/>
    <property type="match status" value="1"/>
</dbReference>
<dbReference type="PROSITE" id="PS51217">
    <property type="entry name" value="UVRD_HELICASE_CTER"/>
    <property type="match status" value="1"/>
</dbReference>
<sequence>MKNWTTEQQAAIDARGSNLLISAAAGSGKTAVLVERIIQIILKDKIDIDRLLIVTFTNAAAGEMRERIAGAIMEEMERKTEQEAHLRRQINLLNRASITTIHSFCIDVVRRHFHIIDVDPGFRIGDITETSIMRLEALEELFEEEYQGAHETFFRLVEAFGGTKEDRPLQDLVLKVYGFIQSQPYPEVWLKEKVGDFSLSIEDFDESLWIKTIKSRIEIQLKGAMDLLNNALSIAQEPGGPEVYEEAILSDLGQISELYDSLTLPITSFYEHLNHINHARLKPSKESDPVLKEESKNLRDKAKGIIKDIKDNIFTVSPEAYVEDLNKLHPLMDYLYQLVTGFTSRYAQKKADRGIVDFNDLEHYGLEILANELVAQEYQQRFEYIFVDEYQDSNIVQETLIQSIKRKDNLFMVGDVKQSIYRFRLADPSLFIEKYETFGEKEGDINRRIDLAKNFRSRGEVLAGVNYLFKYIMSKELGEIGYDHRAALYQGASFESIKEPSIEVNLIEKNMEIDEDIEEELQELADIEVEARIIAKRIKDLLNEEIYDEKNEVYRRLEFKDIVVLLRTTKNWAQSFLEAFIREGIPAYADANTGYFEAIEVGMFLNLLKVIDNKRQDIPLISVMRSPIGEFTTAELIDIRINDKNGTYYDAIEKYIEKNEDALKDKLVSFIEKLNKWGNEARYIKIDQFIWKLLMDTGFYYYVGAMPGGLQRQANLRILFDRASQFEKTSIKGLFNFIKFIEKLQGSKGDMGAAKILGENDNVVRIMSIHKSKGLEFPVVIAAGMGKNFNLRDTSADVLLHKDLGLGPKFVDSNLRTYRDSIAKLAMKDQIKIESLSEEMRILYVAFTRPKDKLIIVGSLRKIDRLVTNWNQADNIYSLMNAKSYLDWIGAALIKHPHGEVLRELGDFEFNELKYKAEDSKWTVNILGRQAVVLEEHEKRLKEEEYKEKLTHFNREDFSPHRHTEHKEEIDNRLNWQYPYPQATVIPSKLSVSDIKKANMGEMDSIVHQIPTLVKTPKFMEGKKALTAAERGTIIHFVLQHLALNQVGSEEEISQQIDLMVARELITEEEAQVVNVGKIVNYFKSEIGKRMLGAEKVYRESPFIIEKSAKDVIHGLSENLEEKLLVQGVIDCYFEEMDGLVLVDYKNDIVLNGDTASIMTRYDVQLMMYAEALERITGKQVKETYLYLFDVDQGVKR</sequence>
<keyword id="KW-0067">ATP-binding</keyword>
<keyword id="KW-0227">DNA damage</keyword>
<keyword id="KW-0234">DNA repair</keyword>
<keyword id="KW-0238">DNA-binding</keyword>
<keyword id="KW-0269">Exonuclease</keyword>
<keyword id="KW-0347">Helicase</keyword>
<keyword id="KW-0378">Hydrolase</keyword>
<keyword id="KW-0413">Isomerase</keyword>
<keyword id="KW-0540">Nuclease</keyword>
<keyword id="KW-0547">Nucleotide-binding</keyword>
<keyword id="KW-1185">Reference proteome</keyword>
<reference key="1">
    <citation type="journal article" date="2016" name="Genome Announc.">
        <title>Complete genome sequence of Alkaliphilus metalliredigens strain QYMF, an alkaliphilic and metal-reducing bacterium isolated from borax-contaminated leachate ponds.</title>
        <authorList>
            <person name="Hwang C."/>
            <person name="Copeland A."/>
            <person name="Lucas S."/>
            <person name="Lapidus A."/>
            <person name="Barry K."/>
            <person name="Detter J.C."/>
            <person name="Glavina Del Rio T."/>
            <person name="Hammon N."/>
            <person name="Israni S."/>
            <person name="Dalin E."/>
            <person name="Tice H."/>
            <person name="Pitluck S."/>
            <person name="Chertkov O."/>
            <person name="Brettin T."/>
            <person name="Bruce D."/>
            <person name="Han C."/>
            <person name="Schmutz J."/>
            <person name="Larimer F."/>
            <person name="Land M.L."/>
            <person name="Hauser L."/>
            <person name="Kyrpides N."/>
            <person name="Mikhailova N."/>
            <person name="Ye Q."/>
            <person name="Zhou J."/>
            <person name="Richardson P."/>
            <person name="Fields M.W."/>
        </authorList>
    </citation>
    <scope>NUCLEOTIDE SEQUENCE [LARGE SCALE GENOMIC DNA]</scope>
    <source>
        <strain>QYMF</strain>
    </source>
</reference>
<proteinExistence type="inferred from homology"/>
<name>ADDA_ALKMQ</name>
<comment type="function">
    <text evidence="1">The heterodimer acts as both an ATP-dependent DNA helicase and an ATP-dependent, dual-direction single-stranded exonuclease. Recognizes the chi site generating a DNA molecule suitable for the initiation of homologous recombination. The AddA nuclease domain is required for chi fragment generation; this subunit has the helicase and 3' -&gt; 5' nuclease activities.</text>
</comment>
<comment type="catalytic activity">
    <reaction evidence="1">
        <text>Couples ATP hydrolysis with the unwinding of duplex DNA by translocating in the 3'-5' direction.</text>
        <dbReference type="EC" id="5.6.2.4"/>
    </reaction>
</comment>
<comment type="catalytic activity">
    <reaction evidence="1">
        <text>ATP + H2O = ADP + phosphate + H(+)</text>
        <dbReference type="Rhea" id="RHEA:13065"/>
        <dbReference type="ChEBI" id="CHEBI:15377"/>
        <dbReference type="ChEBI" id="CHEBI:15378"/>
        <dbReference type="ChEBI" id="CHEBI:30616"/>
        <dbReference type="ChEBI" id="CHEBI:43474"/>
        <dbReference type="ChEBI" id="CHEBI:456216"/>
        <dbReference type="EC" id="5.6.2.4"/>
    </reaction>
</comment>
<comment type="cofactor">
    <cofactor evidence="1">
        <name>Mg(2+)</name>
        <dbReference type="ChEBI" id="CHEBI:18420"/>
    </cofactor>
</comment>
<comment type="subunit">
    <text evidence="1">Heterodimer of AddA and AddB/RexB.</text>
</comment>
<comment type="similarity">
    <text evidence="1">Belongs to the helicase family. AddA subfamily.</text>
</comment>
<organism>
    <name type="scientific">Alkaliphilus metalliredigens (strain QYMF)</name>
    <dbReference type="NCBI Taxonomy" id="293826"/>
    <lineage>
        <taxon>Bacteria</taxon>
        <taxon>Bacillati</taxon>
        <taxon>Bacillota</taxon>
        <taxon>Clostridia</taxon>
        <taxon>Peptostreptococcales</taxon>
        <taxon>Natronincolaceae</taxon>
        <taxon>Alkaliphilus</taxon>
    </lineage>
</organism>
<feature type="chain" id="PRO_0000379227" description="ATP-dependent helicase/nuclease subunit A">
    <location>
        <begin position="1"/>
        <end position="1197"/>
    </location>
</feature>
<feature type="domain" description="UvrD-like helicase ATP-binding" evidence="1">
    <location>
        <begin position="2"/>
        <end position="458"/>
    </location>
</feature>
<feature type="domain" description="UvrD-like helicase C-terminal" evidence="1">
    <location>
        <begin position="485"/>
        <end position="774"/>
    </location>
</feature>
<feature type="binding site" evidence="1">
    <location>
        <begin position="23"/>
        <end position="30"/>
    </location>
    <ligand>
        <name>ATP</name>
        <dbReference type="ChEBI" id="CHEBI:30616"/>
    </ligand>
</feature>
<evidence type="ECO:0000255" key="1">
    <source>
        <dbReference type="HAMAP-Rule" id="MF_01451"/>
    </source>
</evidence>
<accession>A6TVN2</accession>
<gene>
    <name evidence="1" type="primary">addA</name>
    <name type="ordered locus">Amet_4169</name>
</gene>
<protein>
    <recommendedName>
        <fullName evidence="1">ATP-dependent helicase/nuclease subunit A</fullName>
        <ecNumber evidence="1">3.1.-.-</ecNumber>
        <ecNumber evidence="1">5.6.2.4</ecNumber>
    </recommendedName>
    <alternativeName>
        <fullName evidence="1">ATP-dependent helicase/nuclease AddA</fullName>
    </alternativeName>
    <alternativeName>
        <fullName evidence="1">DNA 3'-5' helicase AddA</fullName>
    </alternativeName>
</protein>